<protein>
    <recommendedName>
        <fullName>PB2-S1</fullName>
    </recommendedName>
</protein>
<feature type="chain" id="PRO_0000440605" description="PB2-S1">
    <location>
        <begin position="1"/>
        <end position="507"/>
    </location>
</feature>
<dbReference type="EMBL" id="DQ208309">
    <property type="status" value="NOT_ANNOTATED_CDS"/>
    <property type="molecule type" value="mRNA"/>
</dbReference>
<dbReference type="SMR" id="P0DOG7"/>
<dbReference type="Proteomes" id="UP000008430">
    <property type="component" value="Genome"/>
</dbReference>
<dbReference type="GO" id="GO:0044164">
    <property type="term" value="C:host cell cytosol"/>
    <property type="evidence" value="ECO:0007669"/>
    <property type="project" value="UniProtKB-SubCell"/>
</dbReference>
<dbReference type="GO" id="GO:0033650">
    <property type="term" value="C:host cell mitochondrion"/>
    <property type="evidence" value="ECO:0007669"/>
    <property type="project" value="UniProtKB-SubCell"/>
</dbReference>
<dbReference type="InterPro" id="IPR049110">
    <property type="entry name" value="Flu_PB2_2nd"/>
</dbReference>
<dbReference type="InterPro" id="IPR048298">
    <property type="entry name" value="Flu_PB2_CAP-bd"/>
</dbReference>
<dbReference type="InterPro" id="IPR049111">
    <property type="entry name" value="Flu_PB2_middle"/>
</dbReference>
<dbReference type="InterPro" id="IPR049106">
    <property type="entry name" value="Flu_PB2_N"/>
</dbReference>
<dbReference type="InterPro" id="IPR049113">
    <property type="entry name" value="PB2_helical"/>
</dbReference>
<dbReference type="Pfam" id="PF20947">
    <property type="entry name" value="Flu_PB2_1st"/>
    <property type="match status" value="1"/>
</dbReference>
<dbReference type="Pfam" id="PF20948">
    <property type="entry name" value="Flu_PB2_2nd"/>
    <property type="match status" value="1"/>
</dbReference>
<dbReference type="Pfam" id="PF20949">
    <property type="entry name" value="Flu_PB2_3rd"/>
    <property type="match status" value="1"/>
</dbReference>
<dbReference type="Pfam" id="PF20950">
    <property type="entry name" value="Flu_PB2_4th"/>
    <property type="match status" value="1"/>
</dbReference>
<dbReference type="Pfam" id="PF00604">
    <property type="entry name" value="Flu_PB2_5th"/>
    <property type="match status" value="1"/>
</dbReference>
<evidence type="ECO:0000250" key="1">
    <source>
        <dbReference type="UniProtKB" id="P03427"/>
    </source>
</evidence>
<evidence type="ECO:0000250" key="2">
    <source>
        <dbReference type="UniProtKB" id="P0DOG3"/>
    </source>
</evidence>
<name>PB2S1_I18A0</name>
<organismHost>
    <name type="scientific">Aves</name>
    <dbReference type="NCBI Taxonomy" id="8782"/>
</organismHost>
<organismHost>
    <name type="scientific">Homo sapiens</name>
    <name type="common">Human</name>
    <dbReference type="NCBI Taxonomy" id="9606"/>
</organismHost>
<organismHost>
    <name type="scientific">Sus scrofa</name>
    <name type="common">Pig</name>
    <dbReference type="NCBI Taxonomy" id="9823"/>
</organismHost>
<reference key="1">
    <citation type="journal article" date="2005" name="Nature">
        <title>Characterization of the 1918 influenza virus polymerase genes.</title>
        <authorList>
            <person name="Taubenberger J.K."/>
            <person name="Reid A.H."/>
            <person name="Lourens R.M."/>
            <person name="Wang R."/>
            <person name="Jin G."/>
            <person name="Fanning T.G."/>
        </authorList>
    </citation>
    <scope>NUCLEOTIDE SEQUENCE [MRNA]</scope>
</reference>
<gene>
    <name type="primary">PB2</name>
</gene>
<accession>P0DOG7</accession>
<sequence length="507" mass="57669">MERIKELRDLMSQSRTREILTKTTVDHMAIIKKYTSGRQEKNPALRMKWMMAMKYPITADKRIMEMIPERNEQGQTLWSKTNDAGSDRVMVSPLAVTWWNRNGPTTSAVHYPKIYKTYFEKVERLKHGTFGPVHFRNQVKIRRRVDINPGHADLSAKEAQDVIMEVVFPNEVGARILTSESQLTITKEKKEELQDCKISPLMVAYMLERELVRKTRFLPVAGGTSSVYIEVLHLTQGTCWEQMYTPGGEVRNDDVDQSLIIAARNIVRRATVSADPLASLLEMCHSTQIGGIRMVDILRQNPTEEQAVDICKAAMGLRISSSFSFGGFTFKRTSGSSVKREEEVLTGNLQTLKIRVHEGYEEFTMVGRRATAILRKATRRLIQLIVSGRDEQSIAEAIIVAMVFSQEDCMIKAVRGDLNFVNRANQRLNPMHQLLRHFQKDAKVLFQNWGIEPIDNVMGMIGILPDMTPSTEMSMRGVRVSKMGVDEYSSTERVPLHQSKVECSSPL</sequence>
<comment type="function">
    <text evidence="2">May participate in the inhibition of type I interferon induction through inhibition of the host mitochondrial antiviral signaling protein MAVS. The knockout of PB2-S1 has no detectable effects on laboratory infected mice.</text>
</comment>
<comment type="subcellular location">
    <subcellularLocation>
        <location evidence="2">Host mitochondrion</location>
    </subcellularLocation>
    <subcellularLocation>
        <location evidence="2">Host cytoplasm</location>
        <location evidence="2">Host cytosol</location>
    </subcellularLocation>
</comment>
<comment type="alternative products">
    <event type="alternative splicing"/>
    <isoform>
        <id>P0DOG7-1</id>
        <name evidence="1">PB2-S1</name>
        <sequence type="displayed"/>
    </isoform>
    <isoform>
        <id>Q3HM41-1</id>
        <name>Polymerase basic protein 2</name>
        <sequence type="external"/>
    </isoform>
</comment>
<organism>
    <name type="scientific">Influenza A virus (strain A/Brevig Mission/1/1918 H1N1)</name>
    <name type="common">Influenza A virus (strain A/South Carolina/1/1918 H1N1)</name>
    <dbReference type="NCBI Taxonomy" id="88776"/>
    <lineage>
        <taxon>Viruses</taxon>
        <taxon>Riboviria</taxon>
        <taxon>Orthornavirae</taxon>
        <taxon>Negarnaviricota</taxon>
        <taxon>Polyploviricotina</taxon>
        <taxon>Insthoviricetes</taxon>
        <taxon>Articulavirales</taxon>
        <taxon>Orthomyxoviridae</taxon>
        <taxon>Alphainfluenzavirus</taxon>
        <taxon>Alphainfluenzavirus influenzae</taxon>
        <taxon>Influenza A virus</taxon>
    </lineage>
</organism>
<keyword id="KW-0025">Alternative splicing</keyword>
<keyword id="KW-1035">Host cytoplasm</keyword>
<keyword id="KW-1045">Host mitochondrion</keyword>
<proteinExistence type="evidence at transcript level"/>